<accession>A6W5T0</accession>
<name>RPOB_KINRD</name>
<sequence>MEGPLLAASLPASAPNSTYIGNQSPRTVSGRYSFGKIHEPLEVPDLLALQTDSFDWLLGNKRWQDRVEASTNGGLAVPTTSGLEEIFEEISPIEDFSGSMSLSFRDHRFEPPKYSLDDCKERDLTYSAPLFVTAEFINGNTGEIKSQTVFMGDFPLMTDRGTFVINGTERVVVSQLVRSPGIYFERVPDKTSDRDTWTAKIIPSRGAWLEFEIDKRDTVGVRVDRKRKQSVTVLMKALGWSESQIREEFADYESMISTLEKDHTSGVEDALLDIYRKLRPGEPPTQEAARNLLDNLYFNPKRYDLAKVGRYKVNKKLGTEEPLSDSVLSVDDIVRTIKYLVKLHAGEVTMPGVKNGQPVDVRVEVDDIDHFGNRRLRSVGELIQNQVRTGLSRMERVVRERMTTQDVEAITPQTLINIRPVVASIKEFFGTSQLSQFMDQTNPLAGLTHKRRLSALGPGGLSRERAGMEVRDVHPSHYGRMCPIETPEGPNIGLIGSLSSYGRINPFGFIETPYRKIVDGVVSDEVEYLTADEEDAFVIAQANAPLDADSRFAEARVLVRAKGGETEFVPRDEVDYMDVAARQMVSVATAMIPFLEHDDANRALMGANMQRQAVPLVKSEAPLIGTGMEFRAAVDAGDVVVATKAGVATDVSADMITTSNDDGTSTTYKVAKFRRSNHGTAYNQQVVINEGDRVEVGTVLADGPSTDGGEMALGRNLMVAFMPWEGHNYEDAIILSQRLVQDDVLSSIHIEEHEVDARDTKLGPEEITRDIPNVAEEVLADLDERGIIRIGAEVRDGDLLVGKVTPKGETELTPEERLLRAIFGEKAREVRDTSLKVPHGETGTVIGVKVFDRDEGDELPPGVNQLVRVYVANKRKITDGDKLAGRHGNKGVISKILPVEDMPFLEDGTPVDVILNPLGVPSRMNVGQVLELHLGWIASRGWKIEGQPDWAKLIPEEIREAPAGSRIATPVFDGAREEEITGLLSSTIPTRDGDRLVGGDGKARLFDGRSGEPFPDPVAVGYMYILKLHHLVDDKIHARSTGPYSMITQQPLGGKAQFGGQRFGEMEVWALEAYGAAYALQELLTIKSDDVLGRVKVYEAIVKGENIPEPGIPESFKVLIKEMQSLCLNVEVLSSDGMAIEMRDSDEDVFRAAEELGIDLARREPSSVEEV</sequence>
<keyword id="KW-0240">DNA-directed RNA polymerase</keyword>
<keyword id="KW-0548">Nucleotidyltransferase</keyword>
<keyword id="KW-1185">Reference proteome</keyword>
<keyword id="KW-0804">Transcription</keyword>
<keyword id="KW-0808">Transferase</keyword>
<feature type="chain" id="PRO_0000329181" description="DNA-directed RNA polymerase subunit beta">
    <location>
        <begin position="1"/>
        <end position="1171"/>
    </location>
</feature>
<gene>
    <name evidence="1" type="primary">rpoB</name>
    <name type="ordered locus">Krad_0680</name>
</gene>
<organism>
    <name type="scientific">Kineococcus radiotolerans (strain ATCC BAA-149 / DSM 14245 / SRS30216)</name>
    <dbReference type="NCBI Taxonomy" id="266940"/>
    <lineage>
        <taxon>Bacteria</taxon>
        <taxon>Bacillati</taxon>
        <taxon>Actinomycetota</taxon>
        <taxon>Actinomycetes</taxon>
        <taxon>Kineosporiales</taxon>
        <taxon>Kineosporiaceae</taxon>
        <taxon>Kineococcus</taxon>
    </lineage>
</organism>
<protein>
    <recommendedName>
        <fullName evidence="1">DNA-directed RNA polymerase subunit beta</fullName>
        <shortName evidence="1">RNAP subunit beta</shortName>
        <ecNumber evidence="1">2.7.7.6</ecNumber>
    </recommendedName>
    <alternativeName>
        <fullName evidence="1">RNA polymerase subunit beta</fullName>
    </alternativeName>
    <alternativeName>
        <fullName evidence="1">Transcriptase subunit beta</fullName>
    </alternativeName>
</protein>
<evidence type="ECO:0000255" key="1">
    <source>
        <dbReference type="HAMAP-Rule" id="MF_01321"/>
    </source>
</evidence>
<reference key="1">
    <citation type="journal article" date="2008" name="PLoS ONE">
        <title>Survival in nuclear waste, extreme resistance, and potential applications gleaned from the genome sequence of Kineococcus radiotolerans SRS30216.</title>
        <authorList>
            <person name="Bagwell C.E."/>
            <person name="Bhat S."/>
            <person name="Hawkins G.M."/>
            <person name="Smith B.W."/>
            <person name="Biswas T."/>
            <person name="Hoover T.R."/>
            <person name="Saunders E."/>
            <person name="Han C.S."/>
            <person name="Tsodikov O.V."/>
            <person name="Shimkets L.J."/>
        </authorList>
    </citation>
    <scope>NUCLEOTIDE SEQUENCE [LARGE SCALE GENOMIC DNA]</scope>
    <source>
        <strain>ATCC BAA-149 / DSM 14245 / SRS30216</strain>
    </source>
</reference>
<comment type="function">
    <text evidence="1">DNA-dependent RNA polymerase catalyzes the transcription of DNA into RNA using the four ribonucleoside triphosphates as substrates.</text>
</comment>
<comment type="catalytic activity">
    <reaction evidence="1">
        <text>RNA(n) + a ribonucleoside 5'-triphosphate = RNA(n+1) + diphosphate</text>
        <dbReference type="Rhea" id="RHEA:21248"/>
        <dbReference type="Rhea" id="RHEA-COMP:14527"/>
        <dbReference type="Rhea" id="RHEA-COMP:17342"/>
        <dbReference type="ChEBI" id="CHEBI:33019"/>
        <dbReference type="ChEBI" id="CHEBI:61557"/>
        <dbReference type="ChEBI" id="CHEBI:140395"/>
        <dbReference type="EC" id="2.7.7.6"/>
    </reaction>
</comment>
<comment type="subunit">
    <text evidence="1">The RNAP catalytic core consists of 2 alpha, 1 beta, 1 beta' and 1 omega subunit. When a sigma factor is associated with the core the holoenzyme is formed, which can initiate transcription.</text>
</comment>
<comment type="similarity">
    <text evidence="1">Belongs to the RNA polymerase beta chain family.</text>
</comment>
<proteinExistence type="inferred from homology"/>
<dbReference type="EC" id="2.7.7.6" evidence="1"/>
<dbReference type="EMBL" id="CP000750">
    <property type="protein sequence ID" value="ABS02169.1"/>
    <property type="molecule type" value="Genomic_DNA"/>
</dbReference>
<dbReference type="SMR" id="A6W5T0"/>
<dbReference type="STRING" id="266940.Krad_0680"/>
<dbReference type="KEGG" id="kra:Krad_0680"/>
<dbReference type="eggNOG" id="COG0085">
    <property type="taxonomic scope" value="Bacteria"/>
</dbReference>
<dbReference type="HOGENOM" id="CLU_000524_4_3_11"/>
<dbReference type="Proteomes" id="UP000001116">
    <property type="component" value="Chromosome"/>
</dbReference>
<dbReference type="GO" id="GO:0000428">
    <property type="term" value="C:DNA-directed RNA polymerase complex"/>
    <property type="evidence" value="ECO:0007669"/>
    <property type="project" value="UniProtKB-KW"/>
</dbReference>
<dbReference type="GO" id="GO:0003677">
    <property type="term" value="F:DNA binding"/>
    <property type="evidence" value="ECO:0007669"/>
    <property type="project" value="UniProtKB-UniRule"/>
</dbReference>
<dbReference type="GO" id="GO:0003899">
    <property type="term" value="F:DNA-directed RNA polymerase activity"/>
    <property type="evidence" value="ECO:0007669"/>
    <property type="project" value="UniProtKB-UniRule"/>
</dbReference>
<dbReference type="GO" id="GO:0032549">
    <property type="term" value="F:ribonucleoside binding"/>
    <property type="evidence" value="ECO:0007669"/>
    <property type="project" value="InterPro"/>
</dbReference>
<dbReference type="GO" id="GO:0006351">
    <property type="term" value="P:DNA-templated transcription"/>
    <property type="evidence" value="ECO:0007669"/>
    <property type="project" value="UniProtKB-UniRule"/>
</dbReference>
<dbReference type="CDD" id="cd00653">
    <property type="entry name" value="RNA_pol_B_RPB2"/>
    <property type="match status" value="1"/>
</dbReference>
<dbReference type="FunFam" id="3.90.1800.10:FF:000001">
    <property type="entry name" value="DNA-directed RNA polymerase subunit beta"/>
    <property type="match status" value="1"/>
</dbReference>
<dbReference type="Gene3D" id="2.40.50.100">
    <property type="match status" value="1"/>
</dbReference>
<dbReference type="Gene3D" id="2.40.50.150">
    <property type="match status" value="1"/>
</dbReference>
<dbReference type="Gene3D" id="3.90.1100.10">
    <property type="match status" value="1"/>
</dbReference>
<dbReference type="Gene3D" id="2.30.150.10">
    <property type="entry name" value="DNA-directed RNA polymerase, beta subunit, external 1 domain"/>
    <property type="match status" value="1"/>
</dbReference>
<dbReference type="Gene3D" id="2.40.270.10">
    <property type="entry name" value="DNA-directed RNA polymerase, subunit 2, domain 6"/>
    <property type="match status" value="1"/>
</dbReference>
<dbReference type="Gene3D" id="3.90.1800.10">
    <property type="entry name" value="RNA polymerase alpha subunit dimerisation domain"/>
    <property type="match status" value="1"/>
</dbReference>
<dbReference type="Gene3D" id="3.90.1110.10">
    <property type="entry name" value="RNA polymerase Rpb2, domain 2"/>
    <property type="match status" value="1"/>
</dbReference>
<dbReference type="HAMAP" id="MF_01321">
    <property type="entry name" value="RNApol_bact_RpoB"/>
    <property type="match status" value="1"/>
</dbReference>
<dbReference type="InterPro" id="IPR042107">
    <property type="entry name" value="DNA-dir_RNA_pol_bsu_ext_1_sf"/>
</dbReference>
<dbReference type="InterPro" id="IPR019462">
    <property type="entry name" value="DNA-dir_RNA_pol_bsu_external_1"/>
</dbReference>
<dbReference type="InterPro" id="IPR015712">
    <property type="entry name" value="DNA-dir_RNA_pol_su2"/>
</dbReference>
<dbReference type="InterPro" id="IPR007120">
    <property type="entry name" value="DNA-dir_RNAP_su2_dom"/>
</dbReference>
<dbReference type="InterPro" id="IPR037033">
    <property type="entry name" value="DNA-dir_RNAP_su2_hyb_sf"/>
</dbReference>
<dbReference type="InterPro" id="IPR010243">
    <property type="entry name" value="RNA_pol_bsu_bac"/>
</dbReference>
<dbReference type="InterPro" id="IPR007121">
    <property type="entry name" value="RNA_pol_bsu_CS"/>
</dbReference>
<dbReference type="InterPro" id="IPR007644">
    <property type="entry name" value="RNA_pol_bsu_protrusion"/>
</dbReference>
<dbReference type="InterPro" id="IPR007642">
    <property type="entry name" value="RNA_pol_Rpb2_2"/>
</dbReference>
<dbReference type="InterPro" id="IPR037034">
    <property type="entry name" value="RNA_pol_Rpb2_2_sf"/>
</dbReference>
<dbReference type="InterPro" id="IPR007645">
    <property type="entry name" value="RNA_pol_Rpb2_3"/>
</dbReference>
<dbReference type="InterPro" id="IPR007641">
    <property type="entry name" value="RNA_pol_Rpb2_7"/>
</dbReference>
<dbReference type="InterPro" id="IPR014724">
    <property type="entry name" value="RNA_pol_RPB2_OB-fold"/>
</dbReference>
<dbReference type="NCBIfam" id="NF001616">
    <property type="entry name" value="PRK00405.1"/>
    <property type="match status" value="1"/>
</dbReference>
<dbReference type="NCBIfam" id="TIGR02013">
    <property type="entry name" value="rpoB"/>
    <property type="match status" value="1"/>
</dbReference>
<dbReference type="PANTHER" id="PTHR20856">
    <property type="entry name" value="DNA-DIRECTED RNA POLYMERASE I SUBUNIT 2"/>
    <property type="match status" value="1"/>
</dbReference>
<dbReference type="Pfam" id="PF04563">
    <property type="entry name" value="RNA_pol_Rpb2_1"/>
    <property type="match status" value="1"/>
</dbReference>
<dbReference type="Pfam" id="PF04561">
    <property type="entry name" value="RNA_pol_Rpb2_2"/>
    <property type="match status" value="1"/>
</dbReference>
<dbReference type="Pfam" id="PF04565">
    <property type="entry name" value="RNA_pol_Rpb2_3"/>
    <property type="match status" value="1"/>
</dbReference>
<dbReference type="Pfam" id="PF10385">
    <property type="entry name" value="RNA_pol_Rpb2_45"/>
    <property type="match status" value="1"/>
</dbReference>
<dbReference type="Pfam" id="PF00562">
    <property type="entry name" value="RNA_pol_Rpb2_6"/>
    <property type="match status" value="1"/>
</dbReference>
<dbReference type="Pfam" id="PF04560">
    <property type="entry name" value="RNA_pol_Rpb2_7"/>
    <property type="match status" value="1"/>
</dbReference>
<dbReference type="SUPFAM" id="SSF64484">
    <property type="entry name" value="beta and beta-prime subunits of DNA dependent RNA-polymerase"/>
    <property type="match status" value="1"/>
</dbReference>
<dbReference type="PROSITE" id="PS01166">
    <property type="entry name" value="RNA_POL_BETA"/>
    <property type="match status" value="1"/>
</dbReference>